<gene>
    <name evidence="1" type="primary">smpB</name>
    <name type="ordered locus">LBUL_1704</name>
</gene>
<keyword id="KW-0963">Cytoplasm</keyword>
<keyword id="KW-0694">RNA-binding</keyword>
<sequence>MKQKAKDENVLAQNRQARHDYFIKDTYEAGIALTGTEIKSVRARHVTLRDGYVQIINGSAFLENVHIDEYKEGNRYNHDPLRSRRLLLHKKEIAKLADVKAQKGMTIVPLKVYLKHGFAKVLIGVAQGKKEYDKRETIKKRDQDRELRRKYRI</sequence>
<accession>Q048G7</accession>
<evidence type="ECO:0000255" key="1">
    <source>
        <dbReference type="HAMAP-Rule" id="MF_00023"/>
    </source>
</evidence>
<protein>
    <recommendedName>
        <fullName evidence="1">SsrA-binding protein</fullName>
    </recommendedName>
    <alternativeName>
        <fullName evidence="1">Small protein B</fullName>
    </alternativeName>
</protein>
<name>SSRP_LACDB</name>
<feature type="chain" id="PRO_0000331056" description="SsrA-binding protein">
    <location>
        <begin position="1"/>
        <end position="153"/>
    </location>
</feature>
<organism>
    <name type="scientific">Lactobacillus delbrueckii subsp. bulgaricus (strain ATCC BAA-365 / Lb-18)</name>
    <dbReference type="NCBI Taxonomy" id="321956"/>
    <lineage>
        <taxon>Bacteria</taxon>
        <taxon>Bacillati</taxon>
        <taxon>Bacillota</taxon>
        <taxon>Bacilli</taxon>
        <taxon>Lactobacillales</taxon>
        <taxon>Lactobacillaceae</taxon>
        <taxon>Lactobacillus</taxon>
    </lineage>
</organism>
<proteinExistence type="inferred from homology"/>
<comment type="function">
    <text evidence="1">Required for rescue of stalled ribosomes mediated by trans-translation. Binds to transfer-messenger RNA (tmRNA), required for stable association of tmRNA with ribosomes. tmRNA and SmpB together mimic tRNA shape, replacing the anticodon stem-loop with SmpB. tmRNA is encoded by the ssrA gene; the 2 termini fold to resemble tRNA(Ala) and it encodes a 'tag peptide', a short internal open reading frame. During trans-translation Ala-aminoacylated tmRNA acts like a tRNA, entering the A-site of stalled ribosomes, displacing the stalled mRNA. The ribosome then switches to translate the ORF on the tmRNA; the nascent peptide is terminated with the 'tag peptide' encoded by the tmRNA and targeted for degradation. The ribosome is freed to recommence translation, which seems to be the essential function of trans-translation.</text>
</comment>
<comment type="subcellular location">
    <subcellularLocation>
        <location evidence="1">Cytoplasm</location>
    </subcellularLocation>
    <text evidence="1">The tmRNA-SmpB complex associates with stalled 70S ribosomes.</text>
</comment>
<comment type="similarity">
    <text evidence="1">Belongs to the SmpB family.</text>
</comment>
<reference key="1">
    <citation type="journal article" date="2006" name="Proc. Natl. Acad. Sci. U.S.A.">
        <title>Comparative genomics of the lactic acid bacteria.</title>
        <authorList>
            <person name="Makarova K.S."/>
            <person name="Slesarev A."/>
            <person name="Wolf Y.I."/>
            <person name="Sorokin A."/>
            <person name="Mirkin B."/>
            <person name="Koonin E.V."/>
            <person name="Pavlov A."/>
            <person name="Pavlova N."/>
            <person name="Karamychev V."/>
            <person name="Polouchine N."/>
            <person name="Shakhova V."/>
            <person name="Grigoriev I."/>
            <person name="Lou Y."/>
            <person name="Rohksar D."/>
            <person name="Lucas S."/>
            <person name="Huang K."/>
            <person name="Goodstein D.M."/>
            <person name="Hawkins T."/>
            <person name="Plengvidhya V."/>
            <person name="Welker D."/>
            <person name="Hughes J."/>
            <person name="Goh Y."/>
            <person name="Benson A."/>
            <person name="Baldwin K."/>
            <person name="Lee J.-H."/>
            <person name="Diaz-Muniz I."/>
            <person name="Dosti B."/>
            <person name="Smeianov V."/>
            <person name="Wechter W."/>
            <person name="Barabote R."/>
            <person name="Lorca G."/>
            <person name="Altermann E."/>
            <person name="Barrangou R."/>
            <person name="Ganesan B."/>
            <person name="Xie Y."/>
            <person name="Rawsthorne H."/>
            <person name="Tamir D."/>
            <person name="Parker C."/>
            <person name="Breidt F."/>
            <person name="Broadbent J.R."/>
            <person name="Hutkins R."/>
            <person name="O'Sullivan D."/>
            <person name="Steele J."/>
            <person name="Unlu G."/>
            <person name="Saier M.H. Jr."/>
            <person name="Klaenhammer T."/>
            <person name="Richardson P."/>
            <person name="Kozyavkin S."/>
            <person name="Weimer B.C."/>
            <person name="Mills D.A."/>
        </authorList>
    </citation>
    <scope>NUCLEOTIDE SEQUENCE [LARGE SCALE GENOMIC DNA]</scope>
    <source>
        <strain>ATCC BAA-365 / Lb-18</strain>
    </source>
</reference>
<dbReference type="EMBL" id="CP000412">
    <property type="protein sequence ID" value="ABJ59155.1"/>
    <property type="molecule type" value="Genomic_DNA"/>
</dbReference>
<dbReference type="RefSeq" id="WP_003611142.1">
    <property type="nucleotide sequence ID" value="NC_008529.1"/>
</dbReference>
<dbReference type="SMR" id="Q048G7"/>
<dbReference type="KEGG" id="lbu:LBUL_1704"/>
<dbReference type="HOGENOM" id="CLU_108953_0_0_9"/>
<dbReference type="BioCyc" id="LDEL321956:LBUL_RS08060-MONOMER"/>
<dbReference type="GO" id="GO:0005829">
    <property type="term" value="C:cytosol"/>
    <property type="evidence" value="ECO:0007669"/>
    <property type="project" value="TreeGrafter"/>
</dbReference>
<dbReference type="GO" id="GO:0003723">
    <property type="term" value="F:RNA binding"/>
    <property type="evidence" value="ECO:0007669"/>
    <property type="project" value="UniProtKB-UniRule"/>
</dbReference>
<dbReference type="GO" id="GO:0070929">
    <property type="term" value="P:trans-translation"/>
    <property type="evidence" value="ECO:0007669"/>
    <property type="project" value="UniProtKB-UniRule"/>
</dbReference>
<dbReference type="CDD" id="cd09294">
    <property type="entry name" value="SmpB"/>
    <property type="match status" value="1"/>
</dbReference>
<dbReference type="Gene3D" id="2.40.280.10">
    <property type="match status" value="1"/>
</dbReference>
<dbReference type="HAMAP" id="MF_00023">
    <property type="entry name" value="SmpB"/>
    <property type="match status" value="1"/>
</dbReference>
<dbReference type="InterPro" id="IPR023620">
    <property type="entry name" value="SmpB"/>
</dbReference>
<dbReference type="InterPro" id="IPR000037">
    <property type="entry name" value="SsrA-bd_prot"/>
</dbReference>
<dbReference type="InterPro" id="IPR020081">
    <property type="entry name" value="SsrA-bd_prot_CS"/>
</dbReference>
<dbReference type="NCBIfam" id="NF003843">
    <property type="entry name" value="PRK05422.1"/>
    <property type="match status" value="1"/>
</dbReference>
<dbReference type="NCBIfam" id="TIGR00086">
    <property type="entry name" value="smpB"/>
    <property type="match status" value="1"/>
</dbReference>
<dbReference type="PANTHER" id="PTHR30308:SF2">
    <property type="entry name" value="SSRA-BINDING PROTEIN"/>
    <property type="match status" value="1"/>
</dbReference>
<dbReference type="PANTHER" id="PTHR30308">
    <property type="entry name" value="TMRNA-BINDING COMPONENT OF TRANS-TRANSLATION TAGGING COMPLEX"/>
    <property type="match status" value="1"/>
</dbReference>
<dbReference type="Pfam" id="PF01668">
    <property type="entry name" value="SmpB"/>
    <property type="match status" value="1"/>
</dbReference>
<dbReference type="SUPFAM" id="SSF74982">
    <property type="entry name" value="Small protein B (SmpB)"/>
    <property type="match status" value="1"/>
</dbReference>
<dbReference type="PROSITE" id="PS01317">
    <property type="entry name" value="SSRP"/>
    <property type="match status" value="1"/>
</dbReference>